<proteinExistence type="inferred from homology"/>
<feature type="chain" id="PRO_1000192779" description="LexA repressor">
    <location>
        <begin position="1"/>
        <end position="198"/>
    </location>
</feature>
<feature type="DNA-binding region" description="H-T-H motif" evidence="1">
    <location>
        <begin position="28"/>
        <end position="47"/>
    </location>
</feature>
<feature type="active site" description="For autocatalytic cleavage activity" evidence="1">
    <location>
        <position position="120"/>
    </location>
</feature>
<feature type="active site" description="For autocatalytic cleavage activity" evidence="1">
    <location>
        <position position="157"/>
    </location>
</feature>
<feature type="site" description="Cleavage; by autolysis" evidence="1">
    <location>
        <begin position="84"/>
        <end position="85"/>
    </location>
</feature>
<dbReference type="EC" id="3.4.21.88" evidence="1"/>
<dbReference type="EMBL" id="CP001185">
    <property type="protein sequence ID" value="ACJ76008.1"/>
    <property type="molecule type" value="Genomic_DNA"/>
</dbReference>
<dbReference type="RefSeq" id="WP_004102298.1">
    <property type="nucleotide sequence ID" value="NC_011653.1"/>
</dbReference>
<dbReference type="SMR" id="B7IDD1"/>
<dbReference type="STRING" id="484019.THA_1570"/>
<dbReference type="MEROPS" id="S24.001"/>
<dbReference type="KEGG" id="taf:THA_1570"/>
<dbReference type="eggNOG" id="COG1974">
    <property type="taxonomic scope" value="Bacteria"/>
</dbReference>
<dbReference type="HOGENOM" id="CLU_066192_45_1_0"/>
<dbReference type="OrthoDB" id="9802364at2"/>
<dbReference type="Proteomes" id="UP000002453">
    <property type="component" value="Chromosome"/>
</dbReference>
<dbReference type="GO" id="GO:0003677">
    <property type="term" value="F:DNA binding"/>
    <property type="evidence" value="ECO:0007669"/>
    <property type="project" value="UniProtKB-UniRule"/>
</dbReference>
<dbReference type="GO" id="GO:0004252">
    <property type="term" value="F:serine-type endopeptidase activity"/>
    <property type="evidence" value="ECO:0007669"/>
    <property type="project" value="UniProtKB-UniRule"/>
</dbReference>
<dbReference type="GO" id="GO:0006281">
    <property type="term" value="P:DNA repair"/>
    <property type="evidence" value="ECO:0007669"/>
    <property type="project" value="UniProtKB-UniRule"/>
</dbReference>
<dbReference type="GO" id="GO:0006260">
    <property type="term" value="P:DNA replication"/>
    <property type="evidence" value="ECO:0007669"/>
    <property type="project" value="UniProtKB-UniRule"/>
</dbReference>
<dbReference type="GO" id="GO:0045892">
    <property type="term" value="P:negative regulation of DNA-templated transcription"/>
    <property type="evidence" value="ECO:0007669"/>
    <property type="project" value="UniProtKB-UniRule"/>
</dbReference>
<dbReference type="GO" id="GO:0006508">
    <property type="term" value="P:proteolysis"/>
    <property type="evidence" value="ECO:0007669"/>
    <property type="project" value="InterPro"/>
</dbReference>
<dbReference type="GO" id="GO:0009432">
    <property type="term" value="P:SOS response"/>
    <property type="evidence" value="ECO:0007669"/>
    <property type="project" value="UniProtKB-UniRule"/>
</dbReference>
<dbReference type="CDD" id="cd06529">
    <property type="entry name" value="S24_LexA-like"/>
    <property type="match status" value="1"/>
</dbReference>
<dbReference type="FunFam" id="1.10.10.10:FF:000009">
    <property type="entry name" value="LexA repressor"/>
    <property type="match status" value="1"/>
</dbReference>
<dbReference type="Gene3D" id="2.10.109.10">
    <property type="entry name" value="Umud Fragment, subunit A"/>
    <property type="match status" value="1"/>
</dbReference>
<dbReference type="Gene3D" id="1.10.10.10">
    <property type="entry name" value="Winged helix-like DNA-binding domain superfamily/Winged helix DNA-binding domain"/>
    <property type="match status" value="1"/>
</dbReference>
<dbReference type="HAMAP" id="MF_00015">
    <property type="entry name" value="LexA"/>
    <property type="match status" value="1"/>
</dbReference>
<dbReference type="InterPro" id="IPR006200">
    <property type="entry name" value="LexA"/>
</dbReference>
<dbReference type="InterPro" id="IPR039418">
    <property type="entry name" value="LexA-like"/>
</dbReference>
<dbReference type="InterPro" id="IPR036286">
    <property type="entry name" value="LexA/Signal_pep-like_sf"/>
</dbReference>
<dbReference type="InterPro" id="IPR006199">
    <property type="entry name" value="LexA_DNA-bd_dom"/>
</dbReference>
<dbReference type="InterPro" id="IPR050077">
    <property type="entry name" value="LexA_repressor"/>
</dbReference>
<dbReference type="InterPro" id="IPR006197">
    <property type="entry name" value="Peptidase_S24_LexA"/>
</dbReference>
<dbReference type="InterPro" id="IPR015927">
    <property type="entry name" value="Peptidase_S24_S26A/B/C"/>
</dbReference>
<dbReference type="InterPro" id="IPR036388">
    <property type="entry name" value="WH-like_DNA-bd_sf"/>
</dbReference>
<dbReference type="InterPro" id="IPR036390">
    <property type="entry name" value="WH_DNA-bd_sf"/>
</dbReference>
<dbReference type="NCBIfam" id="TIGR00498">
    <property type="entry name" value="lexA"/>
    <property type="match status" value="1"/>
</dbReference>
<dbReference type="PANTHER" id="PTHR33516">
    <property type="entry name" value="LEXA REPRESSOR"/>
    <property type="match status" value="1"/>
</dbReference>
<dbReference type="PANTHER" id="PTHR33516:SF2">
    <property type="entry name" value="LEXA REPRESSOR-RELATED"/>
    <property type="match status" value="1"/>
</dbReference>
<dbReference type="Pfam" id="PF01726">
    <property type="entry name" value="LexA_DNA_bind"/>
    <property type="match status" value="1"/>
</dbReference>
<dbReference type="Pfam" id="PF00717">
    <property type="entry name" value="Peptidase_S24"/>
    <property type="match status" value="1"/>
</dbReference>
<dbReference type="PRINTS" id="PR00726">
    <property type="entry name" value="LEXASERPTASE"/>
</dbReference>
<dbReference type="SUPFAM" id="SSF51306">
    <property type="entry name" value="LexA/Signal peptidase"/>
    <property type="match status" value="1"/>
</dbReference>
<dbReference type="SUPFAM" id="SSF46785">
    <property type="entry name" value="Winged helix' DNA-binding domain"/>
    <property type="match status" value="1"/>
</dbReference>
<name>LEXA_THEAB</name>
<accession>B7IDD1</accession>
<sequence length="198" mass="22460">MKELTNRQKMVLDFITSYIQQNGYSPSIRDIAKHFKLTPRGAHIHVLALEKKGYITRNPKNSRSISLVKRPETVSIPVKGKISAGQGIEMFELVDEEIEIPVRMINGYGNYFALRVEGTSMIEAHIIDGDYVILKKQYRIPNGQIAAVVFDNKVTLKRFYHKNDKVELVPENSSMSPIICDAKDVKVIGKLVGVIRIY</sequence>
<gene>
    <name evidence="1" type="primary">lexA</name>
    <name type="ordered locus">THA_1570</name>
</gene>
<evidence type="ECO:0000255" key="1">
    <source>
        <dbReference type="HAMAP-Rule" id="MF_00015"/>
    </source>
</evidence>
<protein>
    <recommendedName>
        <fullName evidence="1">LexA repressor</fullName>
        <ecNumber evidence="1">3.4.21.88</ecNumber>
    </recommendedName>
</protein>
<organism>
    <name type="scientific">Thermosipho africanus (strain TCF52B)</name>
    <dbReference type="NCBI Taxonomy" id="484019"/>
    <lineage>
        <taxon>Bacteria</taxon>
        <taxon>Thermotogati</taxon>
        <taxon>Thermotogota</taxon>
        <taxon>Thermotogae</taxon>
        <taxon>Thermotogales</taxon>
        <taxon>Fervidobacteriaceae</taxon>
        <taxon>Thermosipho</taxon>
    </lineage>
</organism>
<keyword id="KW-0068">Autocatalytic cleavage</keyword>
<keyword id="KW-0227">DNA damage</keyword>
<keyword id="KW-0234">DNA repair</keyword>
<keyword id="KW-0235">DNA replication</keyword>
<keyword id="KW-0238">DNA-binding</keyword>
<keyword id="KW-0378">Hydrolase</keyword>
<keyword id="KW-1185">Reference proteome</keyword>
<keyword id="KW-0678">Repressor</keyword>
<keyword id="KW-0742">SOS response</keyword>
<keyword id="KW-0804">Transcription</keyword>
<keyword id="KW-0805">Transcription regulation</keyword>
<reference key="1">
    <citation type="journal article" date="2009" name="J. Bacteriol.">
        <title>The genome of Thermosipho africanus TCF52B: lateral genetic connections to the Firmicutes and Archaea.</title>
        <authorList>
            <person name="Nesboe C.L."/>
            <person name="Bapteste E."/>
            <person name="Curtis B."/>
            <person name="Dahle H."/>
            <person name="Lopez P."/>
            <person name="Macleod D."/>
            <person name="Dlutek M."/>
            <person name="Bowman S."/>
            <person name="Zhaxybayeva O."/>
            <person name="Birkeland N.-K."/>
            <person name="Doolittle W.F."/>
        </authorList>
    </citation>
    <scope>NUCLEOTIDE SEQUENCE [LARGE SCALE GENOMIC DNA]</scope>
    <source>
        <strain>TCF52B</strain>
    </source>
</reference>
<comment type="function">
    <text evidence="1">Represses a number of genes involved in the response to DNA damage (SOS response), including recA and lexA. In the presence of single-stranded DNA, RecA interacts with LexA causing an autocatalytic cleavage which disrupts the DNA-binding part of LexA, leading to derepression of the SOS regulon and eventually DNA repair.</text>
</comment>
<comment type="catalytic activity">
    <reaction evidence="1">
        <text>Hydrolysis of Ala-|-Gly bond in repressor LexA.</text>
        <dbReference type="EC" id="3.4.21.88"/>
    </reaction>
</comment>
<comment type="subunit">
    <text evidence="1">Homodimer.</text>
</comment>
<comment type="similarity">
    <text evidence="1">Belongs to the peptidase S24 family.</text>
</comment>